<feature type="chain" id="PRO_0000386892" description="Ribosomal RNA small subunit methyltransferase H">
    <location>
        <begin position="1"/>
        <end position="310"/>
    </location>
</feature>
<feature type="region of interest" description="Disordered" evidence="2">
    <location>
        <begin position="290"/>
        <end position="310"/>
    </location>
</feature>
<feature type="binding site" evidence="1">
    <location>
        <begin position="32"/>
        <end position="34"/>
    </location>
    <ligand>
        <name>S-adenosyl-L-methionine</name>
        <dbReference type="ChEBI" id="CHEBI:59789"/>
    </ligand>
</feature>
<feature type="binding site" evidence="1">
    <location>
        <position position="51"/>
    </location>
    <ligand>
        <name>S-adenosyl-L-methionine</name>
        <dbReference type="ChEBI" id="CHEBI:59789"/>
    </ligand>
</feature>
<feature type="binding site" evidence="1">
    <location>
        <position position="78"/>
    </location>
    <ligand>
        <name>S-adenosyl-L-methionine</name>
        <dbReference type="ChEBI" id="CHEBI:59789"/>
    </ligand>
</feature>
<feature type="binding site" evidence="1">
    <location>
        <position position="99"/>
    </location>
    <ligand>
        <name>S-adenosyl-L-methionine</name>
        <dbReference type="ChEBI" id="CHEBI:59789"/>
    </ligand>
</feature>
<feature type="binding site" evidence="1">
    <location>
        <position position="106"/>
    </location>
    <ligand>
        <name>S-adenosyl-L-methionine</name>
        <dbReference type="ChEBI" id="CHEBI:59789"/>
    </ligand>
</feature>
<proteinExistence type="inferred from homology"/>
<protein>
    <recommendedName>
        <fullName evidence="1">Ribosomal RNA small subunit methyltransferase H</fullName>
        <ecNumber evidence="1">2.1.1.199</ecNumber>
    </recommendedName>
    <alternativeName>
        <fullName evidence="1">16S rRNA m(4)C1402 methyltransferase</fullName>
    </alternativeName>
    <alternativeName>
        <fullName evidence="1">rRNA (cytosine-N(4)-)-methyltransferase RsmH</fullName>
    </alternativeName>
</protein>
<dbReference type="EC" id="2.1.1.199" evidence="1"/>
<dbReference type="EMBL" id="CP001615">
    <property type="protein sequence ID" value="ACQ71745.1"/>
    <property type="molecule type" value="Genomic_DNA"/>
</dbReference>
<dbReference type="RefSeq" id="WP_015881304.1">
    <property type="nucleotide sequence ID" value="NC_012673.1"/>
</dbReference>
<dbReference type="SMR" id="C4L5T9"/>
<dbReference type="STRING" id="360911.EAT1b_2831"/>
<dbReference type="KEGG" id="eat:EAT1b_2831"/>
<dbReference type="eggNOG" id="COG0275">
    <property type="taxonomic scope" value="Bacteria"/>
</dbReference>
<dbReference type="HOGENOM" id="CLU_038422_2_0_9"/>
<dbReference type="OrthoDB" id="9806637at2"/>
<dbReference type="Proteomes" id="UP000000716">
    <property type="component" value="Chromosome"/>
</dbReference>
<dbReference type="GO" id="GO:0005737">
    <property type="term" value="C:cytoplasm"/>
    <property type="evidence" value="ECO:0007669"/>
    <property type="project" value="UniProtKB-SubCell"/>
</dbReference>
<dbReference type="GO" id="GO:0071424">
    <property type="term" value="F:rRNA (cytosine-N4-)-methyltransferase activity"/>
    <property type="evidence" value="ECO:0007669"/>
    <property type="project" value="UniProtKB-UniRule"/>
</dbReference>
<dbReference type="GO" id="GO:0070475">
    <property type="term" value="P:rRNA base methylation"/>
    <property type="evidence" value="ECO:0007669"/>
    <property type="project" value="UniProtKB-UniRule"/>
</dbReference>
<dbReference type="FunFam" id="1.10.150.170:FF:000001">
    <property type="entry name" value="Ribosomal RNA small subunit methyltransferase H"/>
    <property type="match status" value="1"/>
</dbReference>
<dbReference type="Gene3D" id="1.10.150.170">
    <property type="entry name" value="Putative methyltransferase TM0872, insert domain"/>
    <property type="match status" value="1"/>
</dbReference>
<dbReference type="Gene3D" id="3.40.50.150">
    <property type="entry name" value="Vaccinia Virus protein VP39"/>
    <property type="match status" value="1"/>
</dbReference>
<dbReference type="HAMAP" id="MF_01007">
    <property type="entry name" value="16SrRNA_methyltr_H"/>
    <property type="match status" value="1"/>
</dbReference>
<dbReference type="InterPro" id="IPR002903">
    <property type="entry name" value="RsmH"/>
</dbReference>
<dbReference type="InterPro" id="IPR023397">
    <property type="entry name" value="SAM-dep_MeTrfase_MraW_recog"/>
</dbReference>
<dbReference type="InterPro" id="IPR029063">
    <property type="entry name" value="SAM-dependent_MTases_sf"/>
</dbReference>
<dbReference type="NCBIfam" id="TIGR00006">
    <property type="entry name" value="16S rRNA (cytosine(1402)-N(4))-methyltransferase RsmH"/>
    <property type="match status" value="1"/>
</dbReference>
<dbReference type="PANTHER" id="PTHR11265:SF0">
    <property type="entry name" value="12S RRNA N4-METHYLCYTIDINE METHYLTRANSFERASE"/>
    <property type="match status" value="1"/>
</dbReference>
<dbReference type="PANTHER" id="PTHR11265">
    <property type="entry name" value="S-ADENOSYL-METHYLTRANSFERASE MRAW"/>
    <property type="match status" value="1"/>
</dbReference>
<dbReference type="Pfam" id="PF01795">
    <property type="entry name" value="Methyltransf_5"/>
    <property type="match status" value="1"/>
</dbReference>
<dbReference type="PIRSF" id="PIRSF004486">
    <property type="entry name" value="MraW"/>
    <property type="match status" value="1"/>
</dbReference>
<dbReference type="SUPFAM" id="SSF81799">
    <property type="entry name" value="Putative methyltransferase TM0872, insert domain"/>
    <property type="match status" value="1"/>
</dbReference>
<dbReference type="SUPFAM" id="SSF53335">
    <property type="entry name" value="S-adenosyl-L-methionine-dependent methyltransferases"/>
    <property type="match status" value="1"/>
</dbReference>
<accession>C4L5T9</accession>
<organism>
    <name type="scientific">Exiguobacterium sp. (strain ATCC BAA-1283 / AT1b)</name>
    <dbReference type="NCBI Taxonomy" id="360911"/>
    <lineage>
        <taxon>Bacteria</taxon>
        <taxon>Bacillati</taxon>
        <taxon>Bacillota</taxon>
        <taxon>Bacilli</taxon>
        <taxon>Bacillales</taxon>
        <taxon>Bacillales Family XII. Incertae Sedis</taxon>
        <taxon>Exiguobacterium</taxon>
    </lineage>
</organism>
<name>RSMH_EXISA</name>
<gene>
    <name evidence="1" type="primary">rsmH</name>
    <name type="synonym">mraW</name>
    <name type="ordered locus">EAT1b_2831</name>
</gene>
<reference key="1">
    <citation type="journal article" date="2011" name="J. Bacteriol.">
        <title>Complete genome sequence of the Thermophilic Bacterium Exiguobacterium sp. AT1b.</title>
        <authorList>
            <person name="Vishnivetskaya T.A."/>
            <person name="Lucas S."/>
            <person name="Copeland A."/>
            <person name="Lapidus A."/>
            <person name="Glavina del Rio T."/>
            <person name="Dalin E."/>
            <person name="Tice H."/>
            <person name="Bruce D.C."/>
            <person name="Goodwin L.A."/>
            <person name="Pitluck S."/>
            <person name="Saunders E."/>
            <person name="Brettin T."/>
            <person name="Detter C."/>
            <person name="Han C."/>
            <person name="Larimer F."/>
            <person name="Land M.L."/>
            <person name="Hauser L.J."/>
            <person name="Kyrpides N.C."/>
            <person name="Ovchinnikova G."/>
            <person name="Kathariou S."/>
            <person name="Ramaley R.F."/>
            <person name="Rodrigues D.F."/>
            <person name="Hendrix C."/>
            <person name="Richardson P."/>
            <person name="Tiedje J.M."/>
        </authorList>
    </citation>
    <scope>NUCLEOTIDE SEQUENCE [LARGE SCALE GENOMIC DNA]</scope>
    <source>
        <strain>ATCC BAA-1283 / AT1b</strain>
    </source>
</reference>
<sequence length="310" mass="35138">MFEHETVLKMESIEGLNIKPDGVYVDCTLGGAGHSEEIAKRLTTGQLYAFDQDDVALAHAKERLAPYEGRVTFIKSNFVHLKEELAQRGVTKVDGVLFDLGVSSPQLDEAERGFSYNYDAPLDMRMDRSRDFSAYHVVNEWSFGELARIFFTYGEEKFSKQIARKIEQARADKPIETTFELVDLIKEAIPAPARRKGGHPAKRTFQAIRIAVNDELNVFDRAVQDAIDLLAVNGRICVITFHSLEDRICKQVFKERSQHPPLPPGLPVIPKEFEPELKLITRKPIVASEGELEDNRRSRSAKLRVAEKQK</sequence>
<comment type="function">
    <text evidence="1">Specifically methylates the N4 position of cytidine in position 1402 (C1402) of 16S rRNA.</text>
</comment>
<comment type="catalytic activity">
    <reaction evidence="1">
        <text>cytidine(1402) in 16S rRNA + S-adenosyl-L-methionine = N(4)-methylcytidine(1402) in 16S rRNA + S-adenosyl-L-homocysteine + H(+)</text>
        <dbReference type="Rhea" id="RHEA:42928"/>
        <dbReference type="Rhea" id="RHEA-COMP:10286"/>
        <dbReference type="Rhea" id="RHEA-COMP:10287"/>
        <dbReference type="ChEBI" id="CHEBI:15378"/>
        <dbReference type="ChEBI" id="CHEBI:57856"/>
        <dbReference type="ChEBI" id="CHEBI:59789"/>
        <dbReference type="ChEBI" id="CHEBI:74506"/>
        <dbReference type="ChEBI" id="CHEBI:82748"/>
        <dbReference type="EC" id="2.1.1.199"/>
    </reaction>
</comment>
<comment type="subcellular location">
    <subcellularLocation>
        <location evidence="1">Cytoplasm</location>
    </subcellularLocation>
</comment>
<comment type="similarity">
    <text evidence="1">Belongs to the methyltransferase superfamily. RsmH family.</text>
</comment>
<keyword id="KW-0963">Cytoplasm</keyword>
<keyword id="KW-0489">Methyltransferase</keyword>
<keyword id="KW-0698">rRNA processing</keyword>
<keyword id="KW-0949">S-adenosyl-L-methionine</keyword>
<keyword id="KW-0808">Transferase</keyword>
<evidence type="ECO:0000255" key="1">
    <source>
        <dbReference type="HAMAP-Rule" id="MF_01007"/>
    </source>
</evidence>
<evidence type="ECO:0000256" key="2">
    <source>
        <dbReference type="SAM" id="MobiDB-lite"/>
    </source>
</evidence>